<evidence type="ECO:0000255" key="1">
    <source>
        <dbReference type="HAMAP-Rule" id="MF_00303"/>
    </source>
</evidence>
<feature type="chain" id="PRO_1000022767" description="Trigger factor">
    <location>
        <begin position="1"/>
        <end position="427"/>
    </location>
</feature>
<feature type="domain" description="PPIase FKBP-type" evidence="1">
    <location>
        <begin position="163"/>
        <end position="248"/>
    </location>
</feature>
<name>TIG_STRPG</name>
<keyword id="KW-0131">Cell cycle</keyword>
<keyword id="KW-0132">Cell division</keyword>
<keyword id="KW-0143">Chaperone</keyword>
<keyword id="KW-0963">Cytoplasm</keyword>
<keyword id="KW-0413">Isomerase</keyword>
<keyword id="KW-0697">Rotamase</keyword>
<comment type="function">
    <text evidence="1">Involved in protein export. Acts as a chaperone by maintaining the newly synthesized protein in an open conformation. Functions as a peptidyl-prolyl cis-trans isomerase.</text>
</comment>
<comment type="catalytic activity">
    <reaction evidence="1">
        <text>[protein]-peptidylproline (omega=180) = [protein]-peptidylproline (omega=0)</text>
        <dbReference type="Rhea" id="RHEA:16237"/>
        <dbReference type="Rhea" id="RHEA-COMP:10747"/>
        <dbReference type="Rhea" id="RHEA-COMP:10748"/>
        <dbReference type="ChEBI" id="CHEBI:83833"/>
        <dbReference type="ChEBI" id="CHEBI:83834"/>
        <dbReference type="EC" id="5.2.1.8"/>
    </reaction>
</comment>
<comment type="subcellular location">
    <subcellularLocation>
        <location>Cytoplasm</location>
    </subcellularLocation>
    <text evidence="1">About half TF is bound to the ribosome near the polypeptide exit tunnel while the other half is free in the cytoplasm.</text>
</comment>
<comment type="domain">
    <text evidence="1">Consists of 3 domains; the N-terminus binds the ribosome, the middle domain has PPIase activity, while the C-terminus has intrinsic chaperone activity on its own.</text>
</comment>
<comment type="similarity">
    <text evidence="1">Belongs to the FKBP-type PPIase family. Tig subfamily.</text>
</comment>
<organism>
    <name type="scientific">Streptococcus pyogenes serotype M5 (strain Manfredo)</name>
    <dbReference type="NCBI Taxonomy" id="160491"/>
    <lineage>
        <taxon>Bacteria</taxon>
        <taxon>Bacillati</taxon>
        <taxon>Bacillota</taxon>
        <taxon>Bacilli</taxon>
        <taxon>Lactobacillales</taxon>
        <taxon>Streptococcaceae</taxon>
        <taxon>Streptococcus</taxon>
    </lineage>
</organism>
<proteinExistence type="inferred from homology"/>
<gene>
    <name evidence="1" type="primary">tig</name>
    <name type="ordered locus">SpyM50242</name>
</gene>
<dbReference type="EC" id="5.2.1.8" evidence="1"/>
<dbReference type="EMBL" id="AM295007">
    <property type="protein sequence ID" value="CAM29584.1"/>
    <property type="molecule type" value="Genomic_DNA"/>
</dbReference>
<dbReference type="RefSeq" id="WP_011054989.1">
    <property type="nucleotide sequence ID" value="NC_009332.1"/>
</dbReference>
<dbReference type="SMR" id="A2RCL1"/>
<dbReference type="KEGG" id="spf:SpyM50242"/>
<dbReference type="HOGENOM" id="CLU_033058_3_2_9"/>
<dbReference type="GO" id="GO:0005737">
    <property type="term" value="C:cytoplasm"/>
    <property type="evidence" value="ECO:0007669"/>
    <property type="project" value="UniProtKB-SubCell"/>
</dbReference>
<dbReference type="GO" id="GO:0003755">
    <property type="term" value="F:peptidyl-prolyl cis-trans isomerase activity"/>
    <property type="evidence" value="ECO:0007669"/>
    <property type="project" value="UniProtKB-UniRule"/>
</dbReference>
<dbReference type="GO" id="GO:0044183">
    <property type="term" value="F:protein folding chaperone"/>
    <property type="evidence" value="ECO:0007669"/>
    <property type="project" value="TreeGrafter"/>
</dbReference>
<dbReference type="GO" id="GO:0043022">
    <property type="term" value="F:ribosome binding"/>
    <property type="evidence" value="ECO:0007669"/>
    <property type="project" value="TreeGrafter"/>
</dbReference>
<dbReference type="GO" id="GO:0051083">
    <property type="term" value="P:'de novo' cotranslational protein folding"/>
    <property type="evidence" value="ECO:0007669"/>
    <property type="project" value="TreeGrafter"/>
</dbReference>
<dbReference type="GO" id="GO:0051301">
    <property type="term" value="P:cell division"/>
    <property type="evidence" value="ECO:0007669"/>
    <property type="project" value="UniProtKB-KW"/>
</dbReference>
<dbReference type="GO" id="GO:0061077">
    <property type="term" value="P:chaperone-mediated protein folding"/>
    <property type="evidence" value="ECO:0007669"/>
    <property type="project" value="TreeGrafter"/>
</dbReference>
<dbReference type="GO" id="GO:0015031">
    <property type="term" value="P:protein transport"/>
    <property type="evidence" value="ECO:0007669"/>
    <property type="project" value="UniProtKB-UniRule"/>
</dbReference>
<dbReference type="GO" id="GO:0043335">
    <property type="term" value="P:protein unfolding"/>
    <property type="evidence" value="ECO:0007669"/>
    <property type="project" value="TreeGrafter"/>
</dbReference>
<dbReference type="FunFam" id="3.10.50.40:FF:000001">
    <property type="entry name" value="Trigger factor"/>
    <property type="match status" value="1"/>
</dbReference>
<dbReference type="Gene3D" id="3.10.50.40">
    <property type="match status" value="1"/>
</dbReference>
<dbReference type="Gene3D" id="3.30.70.1050">
    <property type="entry name" value="Trigger factor ribosome-binding domain"/>
    <property type="match status" value="1"/>
</dbReference>
<dbReference type="Gene3D" id="1.10.3120.10">
    <property type="entry name" value="Trigger factor, C-terminal domain"/>
    <property type="match status" value="1"/>
</dbReference>
<dbReference type="HAMAP" id="MF_00303">
    <property type="entry name" value="Trigger_factor_Tig"/>
    <property type="match status" value="1"/>
</dbReference>
<dbReference type="InterPro" id="IPR046357">
    <property type="entry name" value="PPIase_dom_sf"/>
</dbReference>
<dbReference type="InterPro" id="IPR001179">
    <property type="entry name" value="PPIase_FKBP_dom"/>
</dbReference>
<dbReference type="InterPro" id="IPR005215">
    <property type="entry name" value="Trig_fac"/>
</dbReference>
<dbReference type="InterPro" id="IPR008880">
    <property type="entry name" value="Trigger_fac_C"/>
</dbReference>
<dbReference type="InterPro" id="IPR037041">
    <property type="entry name" value="Trigger_fac_C_sf"/>
</dbReference>
<dbReference type="InterPro" id="IPR008881">
    <property type="entry name" value="Trigger_fac_ribosome-bd_bac"/>
</dbReference>
<dbReference type="InterPro" id="IPR036611">
    <property type="entry name" value="Trigger_fac_ribosome-bd_sf"/>
</dbReference>
<dbReference type="InterPro" id="IPR027304">
    <property type="entry name" value="Trigger_fact/SurA_dom_sf"/>
</dbReference>
<dbReference type="NCBIfam" id="TIGR00115">
    <property type="entry name" value="tig"/>
    <property type="match status" value="1"/>
</dbReference>
<dbReference type="PANTHER" id="PTHR30560">
    <property type="entry name" value="TRIGGER FACTOR CHAPERONE AND PEPTIDYL-PROLYL CIS/TRANS ISOMERASE"/>
    <property type="match status" value="1"/>
</dbReference>
<dbReference type="PANTHER" id="PTHR30560:SF3">
    <property type="entry name" value="TRIGGER FACTOR-LIKE PROTEIN TIG, CHLOROPLASTIC"/>
    <property type="match status" value="1"/>
</dbReference>
<dbReference type="Pfam" id="PF00254">
    <property type="entry name" value="FKBP_C"/>
    <property type="match status" value="1"/>
</dbReference>
<dbReference type="Pfam" id="PF05698">
    <property type="entry name" value="Trigger_C"/>
    <property type="match status" value="1"/>
</dbReference>
<dbReference type="Pfam" id="PF05697">
    <property type="entry name" value="Trigger_N"/>
    <property type="match status" value="1"/>
</dbReference>
<dbReference type="PIRSF" id="PIRSF003095">
    <property type="entry name" value="Trigger_factor"/>
    <property type="match status" value="1"/>
</dbReference>
<dbReference type="SUPFAM" id="SSF54534">
    <property type="entry name" value="FKBP-like"/>
    <property type="match status" value="1"/>
</dbReference>
<dbReference type="SUPFAM" id="SSF109998">
    <property type="entry name" value="Triger factor/SurA peptide-binding domain-like"/>
    <property type="match status" value="1"/>
</dbReference>
<dbReference type="SUPFAM" id="SSF102735">
    <property type="entry name" value="Trigger factor ribosome-binding domain"/>
    <property type="match status" value="1"/>
</dbReference>
<dbReference type="PROSITE" id="PS50059">
    <property type="entry name" value="FKBP_PPIASE"/>
    <property type="match status" value="1"/>
</dbReference>
<protein>
    <recommendedName>
        <fullName evidence="1">Trigger factor</fullName>
        <shortName evidence="1">TF</shortName>
        <ecNumber evidence="1">5.2.1.8</ecNumber>
    </recommendedName>
    <alternativeName>
        <fullName evidence="1">PPIase</fullName>
    </alternativeName>
</protein>
<accession>A2RCL1</accession>
<sequence length="427" mass="47096">MSTSFENKATNRGVITFTISQDKIKPALDKAFNKIKKDLNAPGFRKGHMPRPVFNQKFGEEVLYEDALNIVLPEAYEAAVTELGLDVVAQPKIDVVSMEKGKEWTLSAEVVTKPEVKLGDYKNLVVEVDASKEVSDEDVDAKIERERQNLAELIIKDGEAAQGDTVVIDFVGSVDGVEFDGGKGDNFSLELGSGQFIPGFEDQLVGAKAGDEVEVNVTFPESYQAEDLAGKAAKFMTTIHEVKTKEVPELDDELAKDIDEDVDTLEDLKVKYRKELEAAQETAYDDAVEGAAIELAVANAEIVDLPEEMIHEEVNRSVNEFMGNMQRQGISPEMYFQLTGTTQEDLHNQYSAEADKRVKTNLVIEAIAKAEGFEATDSEIEQEINDLATEYNMPADQVRSLLSADMLKHDIAMKKAVEVITSTASVK</sequence>
<reference key="1">
    <citation type="journal article" date="2007" name="J. Bacteriol.">
        <title>Complete genome of acute rheumatic fever-associated serotype M5 Streptococcus pyogenes strain Manfredo.</title>
        <authorList>
            <person name="Holden M.T.G."/>
            <person name="Scott A."/>
            <person name="Cherevach I."/>
            <person name="Chillingworth T."/>
            <person name="Churcher C."/>
            <person name="Cronin A."/>
            <person name="Dowd L."/>
            <person name="Feltwell T."/>
            <person name="Hamlin N."/>
            <person name="Holroyd S."/>
            <person name="Jagels K."/>
            <person name="Moule S."/>
            <person name="Mungall K."/>
            <person name="Quail M.A."/>
            <person name="Price C."/>
            <person name="Rabbinowitsch E."/>
            <person name="Sharp S."/>
            <person name="Skelton J."/>
            <person name="Whitehead S."/>
            <person name="Barrell B.G."/>
            <person name="Kehoe M."/>
            <person name="Parkhill J."/>
        </authorList>
    </citation>
    <scope>NUCLEOTIDE SEQUENCE [LARGE SCALE GENOMIC DNA]</scope>
    <source>
        <strain>Manfredo</strain>
    </source>
</reference>